<comment type="function">
    <text evidence="1">Catalyzes the transfer of a ribosyl phosphate group from 5-phosphoribose 1-diphosphate to orotate, leading to the formation of orotidine monophosphate (OMP).</text>
</comment>
<comment type="catalytic activity">
    <reaction evidence="1">
        <text>orotidine 5'-phosphate + diphosphate = orotate + 5-phospho-alpha-D-ribose 1-diphosphate</text>
        <dbReference type="Rhea" id="RHEA:10380"/>
        <dbReference type="ChEBI" id="CHEBI:30839"/>
        <dbReference type="ChEBI" id="CHEBI:33019"/>
        <dbReference type="ChEBI" id="CHEBI:57538"/>
        <dbReference type="ChEBI" id="CHEBI:58017"/>
        <dbReference type="EC" id="2.4.2.10"/>
    </reaction>
</comment>
<comment type="cofactor">
    <cofactor evidence="1">
        <name>Mg(2+)</name>
        <dbReference type="ChEBI" id="CHEBI:18420"/>
    </cofactor>
</comment>
<comment type="pathway">
    <text evidence="1">Pyrimidine metabolism; UMP biosynthesis via de novo pathway; UMP from orotate: step 1/2.</text>
</comment>
<comment type="subunit">
    <text evidence="1">Homodimer.</text>
</comment>
<comment type="similarity">
    <text evidence="1">Belongs to the purine/pyrimidine phosphoribosyltransferase family. PyrE subfamily.</text>
</comment>
<keyword id="KW-0328">Glycosyltransferase</keyword>
<keyword id="KW-0460">Magnesium</keyword>
<keyword id="KW-0665">Pyrimidine biosynthesis</keyword>
<keyword id="KW-1185">Reference proteome</keyword>
<keyword id="KW-0808">Transferase</keyword>
<sequence length="191" mass="20738">MNREEIIDIFTKTGAMLSGHFRLTSGKHSNRYFQCAQVLQHPQYTQKLCQELANRFENQGVQTVIGPAMGGILVSYEVARSLGVRSLFTERENGKMSLRRSFSLQPGEKVLVVEDVITTGGSVAEVIEVVKSLGGEVVGVGVLVDRSNGKANLGVRTEALLTVSVETYDPDNCPLCDQGLPAVKPGSRQIT</sequence>
<evidence type="ECO:0000255" key="1">
    <source>
        <dbReference type="HAMAP-Rule" id="MF_01208"/>
    </source>
</evidence>
<protein>
    <recommendedName>
        <fullName evidence="1">Orotate phosphoribosyltransferase</fullName>
        <shortName evidence="1">OPRT</shortName>
        <shortName evidence="1">OPRTase</shortName>
        <ecNumber evidence="1">2.4.2.10</ecNumber>
    </recommendedName>
</protein>
<dbReference type="EC" id="2.4.2.10" evidence="1"/>
<dbReference type="EMBL" id="CP000612">
    <property type="protein sequence ID" value="ABO50216.1"/>
    <property type="molecule type" value="Genomic_DNA"/>
</dbReference>
<dbReference type="RefSeq" id="WP_011878031.1">
    <property type="nucleotide sequence ID" value="NC_009253.1"/>
</dbReference>
<dbReference type="SMR" id="A4J563"/>
<dbReference type="STRING" id="349161.Dred_1689"/>
<dbReference type="KEGG" id="drm:Dred_1689"/>
<dbReference type="eggNOG" id="COG0461">
    <property type="taxonomic scope" value="Bacteria"/>
</dbReference>
<dbReference type="HOGENOM" id="CLU_074878_3_0_9"/>
<dbReference type="OrthoDB" id="9783570at2"/>
<dbReference type="UniPathway" id="UPA00070">
    <property type="reaction ID" value="UER00119"/>
</dbReference>
<dbReference type="Proteomes" id="UP000001556">
    <property type="component" value="Chromosome"/>
</dbReference>
<dbReference type="GO" id="GO:0000287">
    <property type="term" value="F:magnesium ion binding"/>
    <property type="evidence" value="ECO:0007669"/>
    <property type="project" value="UniProtKB-UniRule"/>
</dbReference>
<dbReference type="GO" id="GO:0004588">
    <property type="term" value="F:orotate phosphoribosyltransferase activity"/>
    <property type="evidence" value="ECO:0007669"/>
    <property type="project" value="UniProtKB-UniRule"/>
</dbReference>
<dbReference type="GO" id="GO:0044205">
    <property type="term" value="P:'de novo' UMP biosynthetic process"/>
    <property type="evidence" value="ECO:0007669"/>
    <property type="project" value="UniProtKB-UniRule"/>
</dbReference>
<dbReference type="GO" id="GO:0019856">
    <property type="term" value="P:pyrimidine nucleobase biosynthetic process"/>
    <property type="evidence" value="ECO:0007669"/>
    <property type="project" value="InterPro"/>
</dbReference>
<dbReference type="CDD" id="cd06223">
    <property type="entry name" value="PRTases_typeI"/>
    <property type="match status" value="1"/>
</dbReference>
<dbReference type="Gene3D" id="3.40.50.2020">
    <property type="match status" value="1"/>
</dbReference>
<dbReference type="HAMAP" id="MF_01208">
    <property type="entry name" value="PyrE"/>
    <property type="match status" value="1"/>
</dbReference>
<dbReference type="InterPro" id="IPR023031">
    <property type="entry name" value="OPRT"/>
</dbReference>
<dbReference type="InterPro" id="IPR006273">
    <property type="entry name" value="Orotate_PRibTrfase_bac"/>
</dbReference>
<dbReference type="InterPro" id="IPR000836">
    <property type="entry name" value="PRibTrfase_dom"/>
</dbReference>
<dbReference type="InterPro" id="IPR029057">
    <property type="entry name" value="PRTase-like"/>
</dbReference>
<dbReference type="NCBIfam" id="TIGR01367">
    <property type="entry name" value="pyrE_Therm"/>
    <property type="match status" value="1"/>
</dbReference>
<dbReference type="PANTHER" id="PTHR19278">
    <property type="entry name" value="OROTATE PHOSPHORIBOSYLTRANSFERASE"/>
    <property type="match status" value="1"/>
</dbReference>
<dbReference type="PANTHER" id="PTHR19278:SF9">
    <property type="entry name" value="URIDINE 5'-MONOPHOSPHATE SYNTHASE"/>
    <property type="match status" value="1"/>
</dbReference>
<dbReference type="Pfam" id="PF00156">
    <property type="entry name" value="Pribosyltran"/>
    <property type="match status" value="1"/>
</dbReference>
<dbReference type="SUPFAM" id="SSF53271">
    <property type="entry name" value="PRTase-like"/>
    <property type="match status" value="1"/>
</dbReference>
<dbReference type="PROSITE" id="PS00103">
    <property type="entry name" value="PUR_PYR_PR_TRANSFER"/>
    <property type="match status" value="1"/>
</dbReference>
<name>PYRE_DESRM</name>
<proteinExistence type="inferred from homology"/>
<organism>
    <name type="scientific">Desulforamulus reducens (strain ATCC BAA-1160 / DSM 100696 / MI-1)</name>
    <name type="common">Desulfotomaculum reducens</name>
    <dbReference type="NCBI Taxonomy" id="349161"/>
    <lineage>
        <taxon>Bacteria</taxon>
        <taxon>Bacillati</taxon>
        <taxon>Bacillota</taxon>
        <taxon>Clostridia</taxon>
        <taxon>Eubacteriales</taxon>
        <taxon>Peptococcaceae</taxon>
        <taxon>Desulforamulus</taxon>
    </lineage>
</organism>
<feature type="chain" id="PRO_1000138784" description="Orotate phosphoribosyltransferase">
    <location>
        <begin position="1"/>
        <end position="191"/>
    </location>
</feature>
<feature type="binding site" evidence="1">
    <location>
        <begin position="114"/>
        <end position="122"/>
    </location>
    <ligand>
        <name>5-phospho-alpha-D-ribose 1-diphosphate</name>
        <dbReference type="ChEBI" id="CHEBI:58017"/>
    </ligand>
</feature>
<feature type="binding site" evidence="1">
    <location>
        <position position="118"/>
    </location>
    <ligand>
        <name>orotate</name>
        <dbReference type="ChEBI" id="CHEBI:30839"/>
    </ligand>
</feature>
<feature type="binding site" evidence="1">
    <location>
        <position position="146"/>
    </location>
    <ligand>
        <name>orotate</name>
        <dbReference type="ChEBI" id="CHEBI:30839"/>
    </ligand>
</feature>
<gene>
    <name evidence="1" type="primary">pyrE</name>
    <name type="ordered locus">Dred_1689</name>
</gene>
<reference key="1">
    <citation type="submission" date="2007-03" db="EMBL/GenBank/DDBJ databases">
        <title>Complete sequence of Desulfotomaculum reducens MI-1.</title>
        <authorList>
            <consortium name="US DOE Joint Genome Institute"/>
            <person name="Copeland A."/>
            <person name="Lucas S."/>
            <person name="Lapidus A."/>
            <person name="Barry K."/>
            <person name="Detter J.C."/>
            <person name="Glavina del Rio T."/>
            <person name="Hammon N."/>
            <person name="Israni S."/>
            <person name="Dalin E."/>
            <person name="Tice H."/>
            <person name="Pitluck S."/>
            <person name="Sims D."/>
            <person name="Brettin T."/>
            <person name="Bruce D."/>
            <person name="Han C."/>
            <person name="Tapia R."/>
            <person name="Schmutz J."/>
            <person name="Larimer F."/>
            <person name="Land M."/>
            <person name="Hauser L."/>
            <person name="Kyrpides N."/>
            <person name="Kim E."/>
            <person name="Tebo B.M."/>
            <person name="Richardson P."/>
        </authorList>
    </citation>
    <scope>NUCLEOTIDE SEQUENCE [LARGE SCALE GENOMIC DNA]</scope>
    <source>
        <strain>ATCC BAA-1160 / DSM 100696 / MI-1</strain>
    </source>
</reference>
<accession>A4J563</accession>